<evidence type="ECO:0000305" key="1"/>
<evidence type="ECO:0007829" key="2">
    <source>
        <dbReference type="PDB" id="1C52"/>
    </source>
</evidence>
<evidence type="ECO:0007829" key="3">
    <source>
        <dbReference type="PDB" id="1R0Q"/>
    </source>
</evidence>
<evidence type="ECO:0007829" key="4">
    <source>
        <dbReference type="PDB" id="2FWL"/>
    </source>
</evidence>
<accession>P04164</accession>
<protein>
    <recommendedName>
        <fullName>Cytochrome c-552</fullName>
    </recommendedName>
    <alternativeName>
        <fullName>Cytochrome c552</fullName>
    </alternativeName>
</protein>
<proteinExistence type="evidence at protein level"/>
<reference key="1">
    <citation type="journal article" date="1997" name="J. Mol. Biol.">
        <title>Thermus thermophilus cytochrome-c552: a new highly thermostable cytochrome-c structure obtained by MAD phasing.</title>
        <authorList>
            <person name="Than M.E."/>
            <person name="Hof P."/>
            <person name="Huber R."/>
            <person name="Bourenkov G.P."/>
            <person name="Bartunik H.D."/>
            <person name="Buse G."/>
            <person name="Soulimane T."/>
        </authorList>
    </citation>
    <scope>X-RAY CRYSTALLOGRAPHY (1.28 ANGSTROMS)</scope>
</reference>
<feature type="chain" id="PRO_0000108402" description="Cytochrome c-552">
    <location>
        <begin position="1" status="less than"/>
        <end position="131"/>
    </location>
</feature>
<feature type="binding site" description="covalent">
    <location>
        <position position="11"/>
    </location>
    <ligand>
        <name>heme c</name>
        <dbReference type="ChEBI" id="CHEBI:61717"/>
    </ligand>
</feature>
<feature type="binding site" description="covalent">
    <location>
        <position position="14"/>
    </location>
    <ligand>
        <name>heme c</name>
        <dbReference type="ChEBI" id="CHEBI:61717"/>
    </ligand>
</feature>
<feature type="binding site" description="axial binding residue">
    <location>
        <position position="15"/>
    </location>
    <ligand>
        <name>heme c</name>
        <dbReference type="ChEBI" id="CHEBI:61717"/>
    </ligand>
    <ligandPart>
        <name>Fe</name>
        <dbReference type="ChEBI" id="CHEBI:18248"/>
    </ligandPart>
</feature>
<feature type="binding site" description="axial binding residue">
    <location>
        <position position="69"/>
    </location>
    <ligand>
        <name>heme c</name>
        <dbReference type="ChEBI" id="CHEBI:61717"/>
    </ligand>
    <ligandPart>
        <name>Fe</name>
        <dbReference type="ChEBI" id="CHEBI:18248"/>
    </ligandPart>
</feature>
<feature type="non-terminal residue">
    <location>
        <position position="1"/>
    </location>
</feature>
<feature type="helix" evidence="2">
    <location>
        <begin position="4"/>
        <end position="7"/>
    </location>
</feature>
<feature type="helix" evidence="2">
    <location>
        <begin position="9"/>
        <end position="15"/>
    </location>
</feature>
<feature type="turn" evidence="4">
    <location>
        <begin position="16"/>
        <end position="18"/>
    </location>
</feature>
<feature type="turn" evidence="2">
    <location>
        <begin position="23"/>
        <end position="25"/>
    </location>
</feature>
<feature type="helix" evidence="2">
    <location>
        <begin position="32"/>
        <end position="37"/>
    </location>
</feature>
<feature type="helix" evidence="2">
    <location>
        <begin position="42"/>
        <end position="52"/>
    </location>
</feature>
<feature type="strand" evidence="2">
    <location>
        <begin position="54"/>
        <end position="60"/>
    </location>
</feature>
<feature type="strand" evidence="2">
    <location>
        <begin position="63"/>
        <end position="69"/>
    </location>
</feature>
<feature type="helix" evidence="2">
    <location>
        <begin position="77"/>
        <end position="89"/>
    </location>
</feature>
<feature type="helix" evidence="2">
    <location>
        <begin position="94"/>
        <end position="96"/>
    </location>
</feature>
<feature type="strand" evidence="3">
    <location>
        <begin position="97"/>
        <end position="99"/>
    </location>
</feature>
<feature type="helix" evidence="2">
    <location>
        <begin position="105"/>
        <end position="111"/>
    </location>
</feature>
<feature type="helix" evidence="2">
    <location>
        <begin position="118"/>
        <end position="126"/>
    </location>
</feature>
<comment type="function">
    <text>This monoheme basic protein appears to function as an electron donor to cytochrome oxidase in T.thermophilus.</text>
</comment>
<comment type="PTM">
    <text>Binds 1 heme c group covalently per subunit.</text>
</comment>
<comment type="caution">
    <text evidence="1">The sequence shown here has been extracted from PDB entry 1C52.</text>
</comment>
<keyword id="KW-0002">3D-structure</keyword>
<keyword id="KW-0249">Electron transport</keyword>
<keyword id="KW-0349">Heme</keyword>
<keyword id="KW-0408">Iron</keyword>
<keyword id="KW-0479">Metal-binding</keyword>
<keyword id="KW-0813">Transport</keyword>
<name>CY552_THETH</name>
<sequence length="131" mass="14173">QADGAKIYAQCAGCHQQNGQGIPGAFPPLAGHVAEILAKEGGREYLILVLLYGLQGQIEVKGMKYNGVMSSFAQLKDEEIAAVLNHIATAWGDAKKVKGFKPFTAEEVKKLRAKKLTPQQVLAERKKLGLK</sequence>
<gene>
    <name type="primary">cycA</name>
</gene>
<dbReference type="PIR" id="A00112">
    <property type="entry name" value="CCTW5T"/>
</dbReference>
<dbReference type="PDB" id="1C52">
    <property type="method" value="X-ray"/>
    <property type="resolution" value="1.28 A"/>
    <property type="chains" value="A=1-131"/>
</dbReference>
<dbReference type="PDB" id="1QYZ">
    <property type="method" value="X-ray"/>
    <property type="resolution" value="1.40 A"/>
    <property type="chains" value="A=1-131"/>
</dbReference>
<dbReference type="PDB" id="1R0Q">
    <property type="method" value="X-ray"/>
    <property type="resolution" value="1.61 A"/>
    <property type="chains" value="A=1-131"/>
</dbReference>
<dbReference type="PDB" id="2FWL">
    <property type="method" value="NMR"/>
    <property type="chains" value="A=1-131"/>
</dbReference>
<dbReference type="PDB" id="3VNW">
    <property type="method" value="X-ray"/>
    <property type="resolution" value="1.97 A"/>
    <property type="chains" value="A=3-131"/>
</dbReference>
<dbReference type="PDBsum" id="1C52"/>
<dbReference type="PDBsum" id="1QYZ"/>
<dbReference type="PDBsum" id="1R0Q"/>
<dbReference type="PDBsum" id="2FWL"/>
<dbReference type="PDBsum" id="3VNW"/>
<dbReference type="SMR" id="P04164"/>
<dbReference type="DrugBank" id="DB02949">
    <property type="generic name" value="2-Acetyl-Protoporphyrin Ix"/>
</dbReference>
<dbReference type="DrugBank" id="DB03224">
    <property type="generic name" value="2-Formyl-Protoporphryn Ix"/>
</dbReference>
<dbReference type="EvolutionaryTrace" id="P04164"/>
<dbReference type="GO" id="GO:0009055">
    <property type="term" value="F:electron transfer activity"/>
    <property type="evidence" value="ECO:0007669"/>
    <property type="project" value="InterPro"/>
</dbReference>
<dbReference type="GO" id="GO:0020037">
    <property type="term" value="F:heme binding"/>
    <property type="evidence" value="ECO:0007669"/>
    <property type="project" value="InterPro"/>
</dbReference>
<dbReference type="GO" id="GO:0046872">
    <property type="term" value="F:metal ion binding"/>
    <property type="evidence" value="ECO:0007669"/>
    <property type="project" value="UniProtKB-KW"/>
</dbReference>
<dbReference type="Gene3D" id="1.10.760.10">
    <property type="entry name" value="Cytochrome c-like domain"/>
    <property type="match status" value="1"/>
</dbReference>
<dbReference type="InterPro" id="IPR009056">
    <property type="entry name" value="Cyt_c-like_dom"/>
</dbReference>
<dbReference type="InterPro" id="IPR036909">
    <property type="entry name" value="Cyt_c-like_dom_sf"/>
</dbReference>
<dbReference type="InterPro" id="IPR051459">
    <property type="entry name" value="Cytochrome_c-type_DH"/>
</dbReference>
<dbReference type="PANTHER" id="PTHR35008:SF4">
    <property type="entry name" value="BLL4482 PROTEIN"/>
    <property type="match status" value="1"/>
</dbReference>
<dbReference type="PANTHER" id="PTHR35008">
    <property type="entry name" value="BLL4482 PROTEIN-RELATED"/>
    <property type="match status" value="1"/>
</dbReference>
<dbReference type="Pfam" id="PF00034">
    <property type="entry name" value="Cytochrom_C"/>
    <property type="match status" value="1"/>
</dbReference>
<dbReference type="SUPFAM" id="SSF46626">
    <property type="entry name" value="Cytochrome c"/>
    <property type="match status" value="1"/>
</dbReference>
<dbReference type="PROSITE" id="PS51007">
    <property type="entry name" value="CYTC"/>
    <property type="match status" value="1"/>
</dbReference>
<organism>
    <name type="scientific">Thermus thermophilus</name>
    <dbReference type="NCBI Taxonomy" id="274"/>
    <lineage>
        <taxon>Bacteria</taxon>
        <taxon>Thermotogati</taxon>
        <taxon>Deinococcota</taxon>
        <taxon>Deinococci</taxon>
        <taxon>Thermales</taxon>
        <taxon>Thermaceae</taxon>
        <taxon>Thermus</taxon>
    </lineage>
</organism>